<geneLocation type="non-photosynthetic plastid"/>
<organism>
    <name type="scientific">Helicosporidium sp. subsp. Simulium jonesii</name>
    <name type="common">Green alga</name>
    <dbReference type="NCBI Taxonomy" id="145475"/>
    <lineage>
        <taxon>Eukaryota</taxon>
        <taxon>Viridiplantae</taxon>
        <taxon>Chlorophyta</taxon>
        <taxon>core chlorophytes</taxon>
        <taxon>Trebouxiophyceae</taxon>
        <taxon>Chlorellales</taxon>
        <taxon>Chlorellaceae</taxon>
        <taxon>Helicosporidium</taxon>
    </lineage>
</organism>
<accession>Q2EEW4</accession>
<protein>
    <recommendedName>
        <fullName evidence="2">Small ribosomal subunit protein uS8c</fullName>
    </recommendedName>
    <alternativeName>
        <fullName>30S ribosomal protein S8, plastid</fullName>
    </alternativeName>
</protein>
<proteinExistence type="inferred from homology"/>
<name>RR8_HELSJ</name>
<keyword id="KW-0934">Plastid</keyword>
<keyword id="KW-0687">Ribonucleoprotein</keyword>
<keyword id="KW-0689">Ribosomal protein</keyword>
<keyword id="KW-0694">RNA-binding</keyword>
<keyword id="KW-0699">rRNA-binding</keyword>
<reference key="1">
    <citation type="journal article" date="2006" name="BMC Biol.">
        <title>The complete plastid genome sequence of the parasitic green alga, Helicosporidium sp. is highly reduced and structured.</title>
        <authorList>
            <person name="de Koning A.P."/>
            <person name="Keeling P.J."/>
        </authorList>
    </citation>
    <scope>NUCLEOTIDE SEQUENCE [LARGE SCALE GENOMIC DNA]</scope>
</reference>
<evidence type="ECO:0000250" key="1"/>
<evidence type="ECO:0000305" key="2"/>
<gene>
    <name type="primary">rps8</name>
</gene>
<sequence>MPRDLFSDALTRLRNALRVNKQTVIIPFSNLNYSFSNILLEEHLLEKKTILSKKYIKLEGLKFYNKKSDHTLFNFFKNCQRLSKPSNRLYIKAGDIPLIDNGLGFVILSTSYGLMTGKKARALNIGGELLCQFNFQ</sequence>
<comment type="function">
    <text evidence="1">One of the primary rRNA binding proteins, it binds directly to 16S rRNA central domain where it helps coordinate assembly of the platform of the 30S subunit.</text>
</comment>
<comment type="subunit">
    <text evidence="1">Part of the 30S ribosomal subunit.</text>
</comment>
<comment type="subcellular location">
    <subcellularLocation>
        <location>Plastid</location>
    </subcellularLocation>
</comment>
<comment type="similarity">
    <text evidence="2">Belongs to the universal ribosomal protein uS8 family.</text>
</comment>
<dbReference type="EMBL" id="DQ398104">
    <property type="protein sequence ID" value="ABD33978.1"/>
    <property type="molecule type" value="Genomic_DNA"/>
</dbReference>
<dbReference type="RefSeq" id="YP_635930.1">
    <property type="nucleotide sequence ID" value="NC_008100.1"/>
</dbReference>
<dbReference type="SMR" id="Q2EEW4"/>
<dbReference type="GeneID" id="4100424"/>
<dbReference type="GO" id="GO:0009536">
    <property type="term" value="C:plastid"/>
    <property type="evidence" value="ECO:0007669"/>
    <property type="project" value="UniProtKB-SubCell"/>
</dbReference>
<dbReference type="GO" id="GO:1990904">
    <property type="term" value="C:ribonucleoprotein complex"/>
    <property type="evidence" value="ECO:0007669"/>
    <property type="project" value="UniProtKB-KW"/>
</dbReference>
<dbReference type="GO" id="GO:0005840">
    <property type="term" value="C:ribosome"/>
    <property type="evidence" value="ECO:0007669"/>
    <property type="project" value="UniProtKB-KW"/>
</dbReference>
<dbReference type="GO" id="GO:0019843">
    <property type="term" value="F:rRNA binding"/>
    <property type="evidence" value="ECO:0007669"/>
    <property type="project" value="UniProtKB-KW"/>
</dbReference>
<dbReference type="GO" id="GO:0003735">
    <property type="term" value="F:structural constituent of ribosome"/>
    <property type="evidence" value="ECO:0007669"/>
    <property type="project" value="InterPro"/>
</dbReference>
<dbReference type="GO" id="GO:0006412">
    <property type="term" value="P:translation"/>
    <property type="evidence" value="ECO:0007669"/>
    <property type="project" value="InterPro"/>
</dbReference>
<dbReference type="FunFam" id="3.30.1490.10:FF:000001">
    <property type="entry name" value="30S ribosomal protein S8"/>
    <property type="match status" value="1"/>
</dbReference>
<dbReference type="Gene3D" id="3.30.1370.30">
    <property type="match status" value="1"/>
</dbReference>
<dbReference type="Gene3D" id="3.30.1490.10">
    <property type="match status" value="1"/>
</dbReference>
<dbReference type="HAMAP" id="MF_01302_B">
    <property type="entry name" value="Ribosomal_uS8_B"/>
    <property type="match status" value="1"/>
</dbReference>
<dbReference type="InterPro" id="IPR000630">
    <property type="entry name" value="Ribosomal_uS8"/>
</dbReference>
<dbReference type="InterPro" id="IPR047863">
    <property type="entry name" value="Ribosomal_uS8_CS"/>
</dbReference>
<dbReference type="InterPro" id="IPR035987">
    <property type="entry name" value="Ribosomal_uS8_sf"/>
</dbReference>
<dbReference type="PANTHER" id="PTHR11758">
    <property type="entry name" value="40S RIBOSOMAL PROTEIN S15A"/>
    <property type="match status" value="1"/>
</dbReference>
<dbReference type="Pfam" id="PF00410">
    <property type="entry name" value="Ribosomal_S8"/>
    <property type="match status" value="1"/>
</dbReference>
<dbReference type="SUPFAM" id="SSF56047">
    <property type="entry name" value="Ribosomal protein S8"/>
    <property type="match status" value="1"/>
</dbReference>
<dbReference type="PROSITE" id="PS00053">
    <property type="entry name" value="RIBOSOMAL_S8"/>
    <property type="match status" value="1"/>
</dbReference>
<feature type="chain" id="PRO_0000290981" description="Small ribosomal subunit protein uS8c">
    <location>
        <begin position="1"/>
        <end position="136"/>
    </location>
</feature>